<organism>
    <name type="scientific">Mycobacterium ulcerans (strain Agy99)</name>
    <dbReference type="NCBI Taxonomy" id="362242"/>
    <lineage>
        <taxon>Bacteria</taxon>
        <taxon>Bacillati</taxon>
        <taxon>Actinomycetota</taxon>
        <taxon>Actinomycetes</taxon>
        <taxon>Mycobacteriales</taxon>
        <taxon>Mycobacteriaceae</taxon>
        <taxon>Mycobacterium</taxon>
        <taxon>Mycobacterium ulcerans group</taxon>
    </lineage>
</organism>
<protein>
    <recommendedName>
        <fullName evidence="1">Nucleoside diphosphate kinase</fullName>
        <shortName evidence="1">NDK</shortName>
        <shortName evidence="1">NDP kinase</shortName>
        <ecNumber evidence="1">2.7.4.6</ecNumber>
    </recommendedName>
    <alternativeName>
        <fullName evidence="1">Nucleoside-2-P kinase</fullName>
    </alternativeName>
</protein>
<feature type="chain" id="PRO_1000026257" description="Nucleoside diphosphate kinase">
    <location>
        <begin position="1"/>
        <end position="136"/>
    </location>
</feature>
<feature type="active site" description="Pros-phosphohistidine intermediate" evidence="1">
    <location>
        <position position="117"/>
    </location>
</feature>
<feature type="binding site" evidence="1">
    <location>
        <position position="10"/>
    </location>
    <ligand>
        <name>ATP</name>
        <dbReference type="ChEBI" id="CHEBI:30616"/>
    </ligand>
</feature>
<feature type="binding site" evidence="1">
    <location>
        <position position="58"/>
    </location>
    <ligand>
        <name>ATP</name>
        <dbReference type="ChEBI" id="CHEBI:30616"/>
    </ligand>
</feature>
<feature type="binding site" evidence="1">
    <location>
        <position position="86"/>
    </location>
    <ligand>
        <name>ATP</name>
        <dbReference type="ChEBI" id="CHEBI:30616"/>
    </ligand>
</feature>
<feature type="binding site" evidence="1">
    <location>
        <position position="92"/>
    </location>
    <ligand>
        <name>ATP</name>
        <dbReference type="ChEBI" id="CHEBI:30616"/>
    </ligand>
</feature>
<feature type="binding site" evidence="1">
    <location>
        <position position="104"/>
    </location>
    <ligand>
        <name>ATP</name>
        <dbReference type="ChEBI" id="CHEBI:30616"/>
    </ligand>
</feature>
<feature type="binding site" evidence="1">
    <location>
        <position position="114"/>
    </location>
    <ligand>
        <name>ATP</name>
        <dbReference type="ChEBI" id="CHEBI:30616"/>
    </ligand>
</feature>
<dbReference type="EC" id="2.7.4.6" evidence="1"/>
<dbReference type="EMBL" id="CP000325">
    <property type="protein sequence ID" value="ABL05838.1"/>
    <property type="molecule type" value="Genomic_DNA"/>
</dbReference>
<dbReference type="RefSeq" id="WP_011741443.1">
    <property type="nucleotide sequence ID" value="NC_008611.1"/>
</dbReference>
<dbReference type="SMR" id="A0PU19"/>
<dbReference type="KEGG" id="mul:MUL_3716"/>
<dbReference type="eggNOG" id="COG0105">
    <property type="taxonomic scope" value="Bacteria"/>
</dbReference>
<dbReference type="HOGENOM" id="CLU_060216_6_3_11"/>
<dbReference type="Proteomes" id="UP000000765">
    <property type="component" value="Chromosome"/>
</dbReference>
<dbReference type="GO" id="GO:0005737">
    <property type="term" value="C:cytoplasm"/>
    <property type="evidence" value="ECO:0007669"/>
    <property type="project" value="UniProtKB-SubCell"/>
</dbReference>
<dbReference type="GO" id="GO:0005524">
    <property type="term" value="F:ATP binding"/>
    <property type="evidence" value="ECO:0007669"/>
    <property type="project" value="UniProtKB-UniRule"/>
</dbReference>
<dbReference type="GO" id="GO:0046872">
    <property type="term" value="F:metal ion binding"/>
    <property type="evidence" value="ECO:0007669"/>
    <property type="project" value="UniProtKB-KW"/>
</dbReference>
<dbReference type="GO" id="GO:0004550">
    <property type="term" value="F:nucleoside diphosphate kinase activity"/>
    <property type="evidence" value="ECO:0007669"/>
    <property type="project" value="UniProtKB-UniRule"/>
</dbReference>
<dbReference type="GO" id="GO:0006241">
    <property type="term" value="P:CTP biosynthetic process"/>
    <property type="evidence" value="ECO:0007669"/>
    <property type="project" value="UniProtKB-UniRule"/>
</dbReference>
<dbReference type="GO" id="GO:0006183">
    <property type="term" value="P:GTP biosynthetic process"/>
    <property type="evidence" value="ECO:0007669"/>
    <property type="project" value="UniProtKB-UniRule"/>
</dbReference>
<dbReference type="GO" id="GO:0006228">
    <property type="term" value="P:UTP biosynthetic process"/>
    <property type="evidence" value="ECO:0007669"/>
    <property type="project" value="UniProtKB-UniRule"/>
</dbReference>
<dbReference type="CDD" id="cd04413">
    <property type="entry name" value="NDPk_I"/>
    <property type="match status" value="1"/>
</dbReference>
<dbReference type="FunFam" id="3.30.70.141:FF:000003">
    <property type="entry name" value="Nucleoside diphosphate kinase"/>
    <property type="match status" value="1"/>
</dbReference>
<dbReference type="Gene3D" id="3.30.70.141">
    <property type="entry name" value="Nucleoside diphosphate kinase-like domain"/>
    <property type="match status" value="1"/>
</dbReference>
<dbReference type="HAMAP" id="MF_00451">
    <property type="entry name" value="NDP_kinase"/>
    <property type="match status" value="1"/>
</dbReference>
<dbReference type="InterPro" id="IPR034907">
    <property type="entry name" value="NDK-like_dom"/>
</dbReference>
<dbReference type="InterPro" id="IPR036850">
    <property type="entry name" value="NDK-like_dom_sf"/>
</dbReference>
<dbReference type="InterPro" id="IPR001564">
    <property type="entry name" value="Nucleoside_diP_kinase"/>
</dbReference>
<dbReference type="NCBIfam" id="NF001908">
    <property type="entry name" value="PRK00668.1"/>
    <property type="match status" value="1"/>
</dbReference>
<dbReference type="PANTHER" id="PTHR11349">
    <property type="entry name" value="NUCLEOSIDE DIPHOSPHATE KINASE"/>
    <property type="match status" value="1"/>
</dbReference>
<dbReference type="Pfam" id="PF00334">
    <property type="entry name" value="NDK"/>
    <property type="match status" value="1"/>
</dbReference>
<dbReference type="PRINTS" id="PR01243">
    <property type="entry name" value="NUCDPKINASE"/>
</dbReference>
<dbReference type="SMART" id="SM00562">
    <property type="entry name" value="NDK"/>
    <property type="match status" value="1"/>
</dbReference>
<dbReference type="SUPFAM" id="SSF54919">
    <property type="entry name" value="Nucleoside diphosphate kinase, NDK"/>
    <property type="match status" value="1"/>
</dbReference>
<dbReference type="PROSITE" id="PS51374">
    <property type="entry name" value="NDPK_LIKE"/>
    <property type="match status" value="1"/>
</dbReference>
<name>NDK_MYCUA</name>
<comment type="function">
    <text evidence="1">Major role in the synthesis of nucleoside triphosphates other than ATP. The ATP gamma phosphate is transferred to the NDP beta phosphate via a ping-pong mechanism, using a phosphorylated active-site intermediate.</text>
</comment>
<comment type="catalytic activity">
    <reaction evidence="1">
        <text>a 2'-deoxyribonucleoside 5'-diphosphate + ATP = a 2'-deoxyribonucleoside 5'-triphosphate + ADP</text>
        <dbReference type="Rhea" id="RHEA:44640"/>
        <dbReference type="ChEBI" id="CHEBI:30616"/>
        <dbReference type="ChEBI" id="CHEBI:61560"/>
        <dbReference type="ChEBI" id="CHEBI:73316"/>
        <dbReference type="ChEBI" id="CHEBI:456216"/>
        <dbReference type="EC" id="2.7.4.6"/>
    </reaction>
</comment>
<comment type="catalytic activity">
    <reaction evidence="1">
        <text>a ribonucleoside 5'-diphosphate + ATP = a ribonucleoside 5'-triphosphate + ADP</text>
        <dbReference type="Rhea" id="RHEA:18113"/>
        <dbReference type="ChEBI" id="CHEBI:30616"/>
        <dbReference type="ChEBI" id="CHEBI:57930"/>
        <dbReference type="ChEBI" id="CHEBI:61557"/>
        <dbReference type="ChEBI" id="CHEBI:456216"/>
        <dbReference type="EC" id="2.7.4.6"/>
    </reaction>
</comment>
<comment type="cofactor">
    <cofactor evidence="1">
        <name>Mg(2+)</name>
        <dbReference type="ChEBI" id="CHEBI:18420"/>
    </cofactor>
</comment>
<comment type="subunit">
    <text evidence="1">Homotetramer.</text>
</comment>
<comment type="subcellular location">
    <subcellularLocation>
        <location evidence="1">Cytoplasm</location>
    </subcellularLocation>
</comment>
<comment type="similarity">
    <text evidence="1">Belongs to the NDK family.</text>
</comment>
<evidence type="ECO:0000255" key="1">
    <source>
        <dbReference type="HAMAP-Rule" id="MF_00451"/>
    </source>
</evidence>
<gene>
    <name evidence="1" type="primary">ndk</name>
    <name type="ordered locus">MUL_3716</name>
</gene>
<reference key="1">
    <citation type="journal article" date="2007" name="Genome Res.">
        <title>Reductive evolution and niche adaptation inferred from the genome of Mycobacterium ulcerans, the causative agent of Buruli ulcer.</title>
        <authorList>
            <person name="Stinear T.P."/>
            <person name="Seemann T."/>
            <person name="Pidot S."/>
            <person name="Frigui W."/>
            <person name="Reysset G."/>
            <person name="Garnier T."/>
            <person name="Meurice G."/>
            <person name="Simon D."/>
            <person name="Bouchier C."/>
            <person name="Ma L."/>
            <person name="Tichit M."/>
            <person name="Porter J.L."/>
            <person name="Ryan J."/>
            <person name="Johnson P.D.R."/>
            <person name="Davies J.K."/>
            <person name="Jenkin G.A."/>
            <person name="Small P.L.C."/>
            <person name="Jones L.M."/>
            <person name="Tekaia F."/>
            <person name="Laval F."/>
            <person name="Daffe M."/>
            <person name="Parkhill J."/>
            <person name="Cole S.T."/>
        </authorList>
    </citation>
    <scope>NUCLEOTIDE SEQUENCE [LARGE SCALE GENOMIC DNA]</scope>
    <source>
        <strain>Agy99</strain>
    </source>
</reference>
<proteinExistence type="inferred from homology"/>
<keyword id="KW-0067">ATP-binding</keyword>
<keyword id="KW-0963">Cytoplasm</keyword>
<keyword id="KW-0418">Kinase</keyword>
<keyword id="KW-0460">Magnesium</keyword>
<keyword id="KW-0479">Metal-binding</keyword>
<keyword id="KW-0546">Nucleotide metabolism</keyword>
<keyword id="KW-0547">Nucleotide-binding</keyword>
<keyword id="KW-0597">Phosphoprotein</keyword>
<keyword id="KW-0808">Transferase</keyword>
<sequence length="136" mass="14682">MTERTLVLIKPDGVQRLLVGEIISRIERKGLAIAALELRNVTEELASQHYAEHEGKPFFGSLLEFITSAPVVAAIVEGPRAIAAFRQLAGGTDPVEKATPGTIRGDFGLETQFNLVHGSDSAESAQREIALWFPSA</sequence>
<accession>A0PU19</accession>